<accession>Q81MJ5</accession>
<accession>Q6HTZ5</accession>
<accession>Q6KN75</accession>
<reference key="1">
    <citation type="journal article" date="2003" name="Nature">
        <title>The genome sequence of Bacillus anthracis Ames and comparison to closely related bacteria.</title>
        <authorList>
            <person name="Read T.D."/>
            <person name="Peterson S.N."/>
            <person name="Tourasse N.J."/>
            <person name="Baillie L.W."/>
            <person name="Paulsen I.T."/>
            <person name="Nelson K.E."/>
            <person name="Tettelin H."/>
            <person name="Fouts D.E."/>
            <person name="Eisen J.A."/>
            <person name="Gill S.R."/>
            <person name="Holtzapple E.K."/>
            <person name="Okstad O.A."/>
            <person name="Helgason E."/>
            <person name="Rilstone J."/>
            <person name="Wu M."/>
            <person name="Kolonay J.F."/>
            <person name="Beanan M.J."/>
            <person name="Dodson R.J."/>
            <person name="Brinkac L.M."/>
            <person name="Gwinn M.L."/>
            <person name="DeBoy R.T."/>
            <person name="Madpu R."/>
            <person name="Daugherty S.C."/>
            <person name="Durkin A.S."/>
            <person name="Haft D.H."/>
            <person name="Nelson W.C."/>
            <person name="Peterson J.D."/>
            <person name="Pop M."/>
            <person name="Khouri H.M."/>
            <person name="Radune D."/>
            <person name="Benton J.L."/>
            <person name="Mahamoud Y."/>
            <person name="Jiang L."/>
            <person name="Hance I.R."/>
            <person name="Weidman J.F."/>
            <person name="Berry K.J."/>
            <person name="Plaut R.D."/>
            <person name="Wolf A.M."/>
            <person name="Watkins K.L."/>
            <person name="Nierman W.C."/>
            <person name="Hazen A."/>
            <person name="Cline R.T."/>
            <person name="Redmond C."/>
            <person name="Thwaite J.E."/>
            <person name="White O."/>
            <person name="Salzberg S.L."/>
            <person name="Thomason B."/>
            <person name="Friedlander A.M."/>
            <person name="Koehler T.M."/>
            <person name="Hanna P.C."/>
            <person name="Kolstoe A.-B."/>
            <person name="Fraser C.M."/>
        </authorList>
    </citation>
    <scope>NUCLEOTIDE SEQUENCE [LARGE SCALE GENOMIC DNA]</scope>
    <source>
        <strain>Ames / isolate Porton</strain>
    </source>
</reference>
<reference key="2">
    <citation type="journal article" date="2009" name="J. Bacteriol.">
        <title>The complete genome sequence of Bacillus anthracis Ames 'Ancestor'.</title>
        <authorList>
            <person name="Ravel J."/>
            <person name="Jiang L."/>
            <person name="Stanley S.T."/>
            <person name="Wilson M.R."/>
            <person name="Decker R.S."/>
            <person name="Read T.D."/>
            <person name="Worsham P."/>
            <person name="Keim P.S."/>
            <person name="Salzberg S.L."/>
            <person name="Fraser-Liggett C.M."/>
            <person name="Rasko D.A."/>
        </authorList>
    </citation>
    <scope>NUCLEOTIDE SEQUENCE [LARGE SCALE GENOMIC DNA]</scope>
    <source>
        <strain>Ames ancestor</strain>
    </source>
</reference>
<reference key="3">
    <citation type="submission" date="2004-01" db="EMBL/GenBank/DDBJ databases">
        <title>Complete genome sequence of Bacillus anthracis Sterne.</title>
        <authorList>
            <person name="Brettin T.S."/>
            <person name="Bruce D."/>
            <person name="Challacombe J.F."/>
            <person name="Gilna P."/>
            <person name="Han C."/>
            <person name="Hill K."/>
            <person name="Hitchcock P."/>
            <person name="Jackson P."/>
            <person name="Keim P."/>
            <person name="Longmire J."/>
            <person name="Lucas S."/>
            <person name="Okinaka R."/>
            <person name="Richardson P."/>
            <person name="Rubin E."/>
            <person name="Tice H."/>
        </authorList>
    </citation>
    <scope>NUCLEOTIDE SEQUENCE [LARGE SCALE GENOMIC DNA]</scope>
    <source>
        <strain>Sterne</strain>
    </source>
</reference>
<name>MTNK_BACAN</name>
<protein>
    <recommendedName>
        <fullName evidence="1">Methylthioribose kinase</fullName>
        <shortName evidence="1">MTR kinase</shortName>
        <ecNumber evidence="1">2.7.1.100</ecNumber>
    </recommendedName>
</protein>
<keyword id="KW-0028">Amino-acid biosynthesis</keyword>
<keyword id="KW-0067">ATP-binding</keyword>
<keyword id="KW-0418">Kinase</keyword>
<keyword id="KW-0486">Methionine biosynthesis</keyword>
<keyword id="KW-0547">Nucleotide-binding</keyword>
<keyword id="KW-1185">Reference proteome</keyword>
<keyword id="KW-0808">Transferase</keyword>
<gene>
    <name evidence="1" type="primary">mtnK</name>
    <name type="ordered locus">BA_4252</name>
    <name type="ordered locus">GBAA_4252</name>
    <name type="ordered locus">BAS3943</name>
</gene>
<dbReference type="EC" id="2.7.1.100" evidence="1"/>
<dbReference type="EMBL" id="AE016879">
    <property type="protein sequence ID" value="AAP27973.1"/>
    <property type="molecule type" value="Genomic_DNA"/>
</dbReference>
<dbReference type="EMBL" id="AE017334">
    <property type="protein sequence ID" value="AAT33369.1"/>
    <property type="molecule type" value="Genomic_DNA"/>
</dbReference>
<dbReference type="EMBL" id="AE017225">
    <property type="protein sequence ID" value="AAT56244.1"/>
    <property type="molecule type" value="Genomic_DNA"/>
</dbReference>
<dbReference type="RefSeq" id="NP_846487.1">
    <property type="nucleotide sequence ID" value="NC_003997.3"/>
</dbReference>
<dbReference type="RefSeq" id="WP_000542711.1">
    <property type="nucleotide sequence ID" value="NZ_WXXJ01000027.1"/>
</dbReference>
<dbReference type="RefSeq" id="YP_030193.1">
    <property type="nucleotide sequence ID" value="NC_005945.1"/>
</dbReference>
<dbReference type="SMR" id="Q81MJ5"/>
<dbReference type="STRING" id="261594.GBAA_4252"/>
<dbReference type="DNASU" id="1088923"/>
<dbReference type="GeneID" id="45023923"/>
<dbReference type="KEGG" id="ban:BA_4252"/>
<dbReference type="KEGG" id="banh:HYU01_20775"/>
<dbReference type="KEGG" id="bar:GBAA_4252"/>
<dbReference type="KEGG" id="bat:BAS3943"/>
<dbReference type="PATRIC" id="fig|198094.11.peg.4222"/>
<dbReference type="eggNOG" id="COG4857">
    <property type="taxonomic scope" value="Bacteria"/>
</dbReference>
<dbReference type="HOGENOM" id="CLU_033681_0_0_9"/>
<dbReference type="OMA" id="EMCEITE"/>
<dbReference type="OrthoDB" id="9777791at2"/>
<dbReference type="UniPathway" id="UPA00904">
    <property type="reaction ID" value="UER00872"/>
</dbReference>
<dbReference type="Proteomes" id="UP000000427">
    <property type="component" value="Chromosome"/>
</dbReference>
<dbReference type="Proteomes" id="UP000000594">
    <property type="component" value="Chromosome"/>
</dbReference>
<dbReference type="GO" id="GO:0005524">
    <property type="term" value="F:ATP binding"/>
    <property type="evidence" value="ECO:0007669"/>
    <property type="project" value="UniProtKB-UniRule"/>
</dbReference>
<dbReference type="GO" id="GO:0046522">
    <property type="term" value="F:S-methyl-5-thioribose kinase activity"/>
    <property type="evidence" value="ECO:0007669"/>
    <property type="project" value="UniProtKB-UniRule"/>
</dbReference>
<dbReference type="GO" id="GO:0019509">
    <property type="term" value="P:L-methionine salvage from methylthioadenosine"/>
    <property type="evidence" value="ECO:0007669"/>
    <property type="project" value="UniProtKB-UniRule"/>
</dbReference>
<dbReference type="FunFam" id="3.30.200.20:FF:000436">
    <property type="entry name" value="Methylthioribose kinase"/>
    <property type="match status" value="1"/>
</dbReference>
<dbReference type="FunFam" id="3.90.1200.10:FF:000008">
    <property type="entry name" value="Methylthioribose kinase"/>
    <property type="match status" value="1"/>
</dbReference>
<dbReference type="Gene3D" id="3.90.1200.10">
    <property type="match status" value="1"/>
</dbReference>
<dbReference type="Gene3D" id="3.30.200.20">
    <property type="entry name" value="Phosphorylase Kinase, domain 1"/>
    <property type="match status" value="1"/>
</dbReference>
<dbReference type="HAMAP" id="MF_01683">
    <property type="entry name" value="Salvage_MtnK"/>
    <property type="match status" value="1"/>
</dbReference>
<dbReference type="InterPro" id="IPR002575">
    <property type="entry name" value="Aminoglycoside_PTrfase"/>
</dbReference>
<dbReference type="InterPro" id="IPR011009">
    <property type="entry name" value="Kinase-like_dom_sf"/>
</dbReference>
<dbReference type="InterPro" id="IPR009212">
    <property type="entry name" value="Methylthioribose_kinase"/>
</dbReference>
<dbReference type="NCBIfam" id="TIGR01767">
    <property type="entry name" value="MTRK"/>
    <property type="match status" value="1"/>
</dbReference>
<dbReference type="PANTHER" id="PTHR34273">
    <property type="entry name" value="METHYLTHIORIBOSE KINASE"/>
    <property type="match status" value="1"/>
</dbReference>
<dbReference type="PANTHER" id="PTHR34273:SF2">
    <property type="entry name" value="METHYLTHIORIBOSE KINASE"/>
    <property type="match status" value="1"/>
</dbReference>
<dbReference type="Pfam" id="PF01636">
    <property type="entry name" value="APH"/>
    <property type="match status" value="1"/>
</dbReference>
<dbReference type="PIRSF" id="PIRSF031134">
    <property type="entry name" value="MTRK"/>
    <property type="match status" value="1"/>
</dbReference>
<dbReference type="SUPFAM" id="SSF56112">
    <property type="entry name" value="Protein kinase-like (PK-like)"/>
    <property type="match status" value="1"/>
</dbReference>
<evidence type="ECO:0000255" key="1">
    <source>
        <dbReference type="HAMAP-Rule" id="MF_01683"/>
    </source>
</evidence>
<comment type="function">
    <text evidence="1">Catalyzes the phosphorylation of methylthioribose into methylthioribose-1-phosphate.</text>
</comment>
<comment type="catalytic activity">
    <reaction evidence="1">
        <text>5-(methylsulfanyl)-D-ribose + ATP = 5-(methylsulfanyl)-alpha-D-ribose 1-phosphate + ADP + H(+)</text>
        <dbReference type="Rhea" id="RHEA:22312"/>
        <dbReference type="ChEBI" id="CHEBI:15378"/>
        <dbReference type="ChEBI" id="CHEBI:30616"/>
        <dbReference type="ChEBI" id="CHEBI:58533"/>
        <dbReference type="ChEBI" id="CHEBI:78440"/>
        <dbReference type="ChEBI" id="CHEBI:456216"/>
        <dbReference type="EC" id="2.7.1.100"/>
    </reaction>
</comment>
<comment type="pathway">
    <text evidence="1">Amino-acid biosynthesis; L-methionine biosynthesis via salvage pathway; S-methyl-5-thio-alpha-D-ribose 1-phosphate from S-methyl-5'-thioadenosine (hydrolase route): step 2/2.</text>
</comment>
<comment type="subunit">
    <text evidence="1">Homodimer.</text>
</comment>
<comment type="similarity">
    <text evidence="1">Belongs to the methylthioribose kinase family.</text>
</comment>
<feature type="chain" id="PRO_0000162913" description="Methylthioribose kinase">
    <location>
        <begin position="1"/>
        <end position="393"/>
    </location>
</feature>
<feature type="binding site" evidence="1">
    <location>
        <position position="38"/>
    </location>
    <ligand>
        <name>ATP</name>
        <dbReference type="ChEBI" id="CHEBI:30616"/>
    </ligand>
</feature>
<feature type="binding site" evidence="1">
    <location>
        <position position="53"/>
    </location>
    <ligand>
        <name>ATP</name>
        <dbReference type="ChEBI" id="CHEBI:30616"/>
    </ligand>
</feature>
<feature type="binding site" evidence="1">
    <location>
        <begin position="107"/>
        <end position="109"/>
    </location>
    <ligand>
        <name>ATP</name>
        <dbReference type="ChEBI" id="CHEBI:30616"/>
    </ligand>
</feature>
<feature type="binding site" evidence="1">
    <location>
        <position position="225"/>
    </location>
    <ligand>
        <name>substrate</name>
    </ligand>
</feature>
<feature type="binding site" evidence="1">
    <location>
        <begin position="242"/>
        <end position="244"/>
    </location>
    <ligand>
        <name>ATP</name>
        <dbReference type="ChEBI" id="CHEBI:30616"/>
    </ligand>
</feature>
<feature type="binding site" evidence="1">
    <location>
        <position position="332"/>
    </location>
    <ligand>
        <name>substrate</name>
    </ligand>
</feature>
<proteinExistence type="inferred from homology"/>
<organism>
    <name type="scientific">Bacillus anthracis</name>
    <dbReference type="NCBI Taxonomy" id="1392"/>
    <lineage>
        <taxon>Bacteria</taxon>
        <taxon>Bacillati</taxon>
        <taxon>Bacillota</taxon>
        <taxon>Bacilli</taxon>
        <taxon>Bacillales</taxon>
        <taxon>Bacillaceae</taxon>
        <taxon>Bacillus</taxon>
        <taxon>Bacillus cereus group</taxon>
    </lineage>
</organism>
<sequence>MGYYSLTEVTAVQYAKEHGYFEKKANVVCHEIGDGNLNYVFKLDDGEKSIIIKQALPYAKVVGESWPLSIKRATIESKALQIFAKYVPEYVPVVYSHDEELAVTVIEDLSRLTITRKGLIDGEEYPLLSQHIGRFLANVLFYTSDFGLQSEEKRVLEGTFVNPDLCKITEDLVFTDPFGHYDTNDYEPELQLTIDELWSDKTLKLKVAQYKYKFLTRKEALIHGDLHTGSIFSSPSETKVIDPEFATYGPFGFDIGQFIANLLLNALSREEEQRGVLFFHIEKTWSYFVETFTKLWIGEGVEAYTKEKQWLPIILQNIFTDAVGFAGCELIRRTIGLAHVADLDEITNKETRIQAKKQALSLGKELIKYESKNADIQLFRTLFQQTVSGGIKA</sequence>